<proteinExistence type="inferred from homology"/>
<evidence type="ECO:0000255" key="1">
    <source>
        <dbReference type="HAMAP-Rule" id="MF_00759"/>
    </source>
</evidence>
<reference key="1">
    <citation type="journal article" date="2006" name="Mol. Microbiol.">
        <title>Role of pathogenicity island-associated integrases in the genome plasticity of uropathogenic Escherichia coli strain 536.</title>
        <authorList>
            <person name="Hochhut B."/>
            <person name="Wilde C."/>
            <person name="Balling G."/>
            <person name="Middendorf B."/>
            <person name="Dobrindt U."/>
            <person name="Brzuszkiewicz E."/>
            <person name="Gottschalk G."/>
            <person name="Carniel E."/>
            <person name="Hacker J."/>
        </authorList>
    </citation>
    <scope>NUCLEOTIDE SEQUENCE [LARGE SCALE GENOMIC DNA]</scope>
    <source>
        <strain>536 / UPEC</strain>
    </source>
</reference>
<dbReference type="EMBL" id="CP000247">
    <property type="protein sequence ID" value="ABG70828.1"/>
    <property type="molecule type" value="Genomic_DNA"/>
</dbReference>
<dbReference type="RefSeq" id="WP_000082196.1">
    <property type="nucleotide sequence ID" value="NC_008253.1"/>
</dbReference>
<dbReference type="SMR" id="Q0TE01"/>
<dbReference type="KEGG" id="ecp:ECP_2844"/>
<dbReference type="HOGENOM" id="CLU_086669_0_0_6"/>
<dbReference type="Proteomes" id="UP000009182">
    <property type="component" value="Chromosome"/>
</dbReference>
<dbReference type="GO" id="GO:0005737">
    <property type="term" value="C:cytoplasm"/>
    <property type="evidence" value="ECO:0007669"/>
    <property type="project" value="UniProtKB-SubCell"/>
</dbReference>
<dbReference type="GO" id="GO:0003677">
    <property type="term" value="F:DNA binding"/>
    <property type="evidence" value="ECO:0007669"/>
    <property type="project" value="InterPro"/>
</dbReference>
<dbReference type="GO" id="GO:0004519">
    <property type="term" value="F:endonuclease activity"/>
    <property type="evidence" value="ECO:0007669"/>
    <property type="project" value="UniProtKB-UniRule"/>
</dbReference>
<dbReference type="GO" id="GO:0006304">
    <property type="term" value="P:DNA modification"/>
    <property type="evidence" value="ECO:0007669"/>
    <property type="project" value="InterPro"/>
</dbReference>
<dbReference type="GO" id="GO:0006298">
    <property type="term" value="P:mismatch repair"/>
    <property type="evidence" value="ECO:0007669"/>
    <property type="project" value="UniProtKB-UniRule"/>
</dbReference>
<dbReference type="CDD" id="cd00583">
    <property type="entry name" value="MutH-like"/>
    <property type="match status" value="1"/>
</dbReference>
<dbReference type="FunFam" id="3.40.600.10:FF:000001">
    <property type="entry name" value="DNA mismatch repair protein MutH"/>
    <property type="match status" value="1"/>
</dbReference>
<dbReference type="Gene3D" id="3.40.600.10">
    <property type="entry name" value="DNA mismatch repair MutH/Restriction endonuclease, type II"/>
    <property type="match status" value="1"/>
</dbReference>
<dbReference type="HAMAP" id="MF_00759">
    <property type="entry name" value="MutH"/>
    <property type="match status" value="1"/>
</dbReference>
<dbReference type="InterPro" id="IPR004230">
    <property type="entry name" value="DNA_mismatch_repair_MutH"/>
</dbReference>
<dbReference type="InterPro" id="IPR011337">
    <property type="entry name" value="DNA_rep_MutH/RE_typeII_Sau3AI"/>
</dbReference>
<dbReference type="InterPro" id="IPR037057">
    <property type="entry name" value="DNA_rep_MutH/T2_RE_sf"/>
</dbReference>
<dbReference type="InterPro" id="IPR011335">
    <property type="entry name" value="Restrct_endonuc-II-like"/>
</dbReference>
<dbReference type="NCBIfam" id="TIGR02248">
    <property type="entry name" value="mutH_TIGR"/>
    <property type="match status" value="1"/>
</dbReference>
<dbReference type="NCBIfam" id="NF003458">
    <property type="entry name" value="PRK05070.1"/>
    <property type="match status" value="1"/>
</dbReference>
<dbReference type="Pfam" id="PF02976">
    <property type="entry name" value="MutH"/>
    <property type="match status" value="1"/>
</dbReference>
<dbReference type="SMART" id="SM00927">
    <property type="entry name" value="MutH"/>
    <property type="match status" value="1"/>
</dbReference>
<dbReference type="SUPFAM" id="SSF52980">
    <property type="entry name" value="Restriction endonuclease-like"/>
    <property type="match status" value="1"/>
</dbReference>
<organism>
    <name type="scientific">Escherichia coli O6:K15:H31 (strain 536 / UPEC)</name>
    <dbReference type="NCBI Taxonomy" id="362663"/>
    <lineage>
        <taxon>Bacteria</taxon>
        <taxon>Pseudomonadati</taxon>
        <taxon>Pseudomonadota</taxon>
        <taxon>Gammaproteobacteria</taxon>
        <taxon>Enterobacterales</taxon>
        <taxon>Enterobacteriaceae</taxon>
        <taxon>Escherichia</taxon>
    </lineage>
</organism>
<protein>
    <recommendedName>
        <fullName evidence="1">DNA mismatch repair protein MutH</fullName>
    </recommendedName>
    <alternativeName>
        <fullName evidence="1">Methyl-directed mismatch repair protein</fullName>
    </alternativeName>
</protein>
<name>MUTH_ECOL5</name>
<gene>
    <name evidence="1" type="primary">mutH</name>
    <name type="ordered locus">ECP_2844</name>
</gene>
<accession>Q0TE01</accession>
<sequence length="229" mass="25533">MSQPRPLLSPPETEEQLLAQAQQLSGYTLGELAALAGLVTPENLKRDKGWIGVLLEIWLGASAGSKPEQDFAALGVELKTIPVDSLGRPLETTFVCVAPLTGNSGVTWETSHVRRKLKRVLWIPVEGERSIPLAKRRVGSPLLWSPNEEEDRQLREDWEELMDMIVLGQIERITARHGEYLQIRPKAANAKALTEAIGARGERILTLPRGFYLKKNFTSALLARHFLIQ</sequence>
<feature type="chain" id="PRO_1000046695" description="DNA mismatch repair protein MutH">
    <location>
        <begin position="1"/>
        <end position="229"/>
    </location>
</feature>
<comment type="function">
    <text evidence="1">Sequence-specific endonuclease that cleaves unmethylated GATC sequences. It is involved in DNA mismatch repair.</text>
</comment>
<comment type="subcellular location">
    <subcellularLocation>
        <location evidence="1">Cytoplasm</location>
    </subcellularLocation>
</comment>
<comment type="similarity">
    <text evidence="1">Belongs to the MutH family.</text>
</comment>
<keyword id="KW-0963">Cytoplasm</keyword>
<keyword id="KW-0227">DNA damage</keyword>
<keyword id="KW-0234">DNA repair</keyword>
<keyword id="KW-0255">Endonuclease</keyword>
<keyword id="KW-0378">Hydrolase</keyword>
<keyword id="KW-0540">Nuclease</keyword>